<dbReference type="EC" id="2.7.4.22" evidence="1"/>
<dbReference type="EMBL" id="AE017196">
    <property type="protein sequence ID" value="AAS14242.1"/>
    <property type="molecule type" value="Genomic_DNA"/>
</dbReference>
<dbReference type="RefSeq" id="WP_010962659.1">
    <property type="nucleotide sequence ID" value="NZ_JAIUXN010000045.1"/>
</dbReference>
<dbReference type="SMR" id="Q73HM2"/>
<dbReference type="EnsemblBacteria" id="AAS14242">
    <property type="protein sequence ID" value="AAS14242"/>
    <property type="gene ID" value="WD_0530"/>
</dbReference>
<dbReference type="KEGG" id="wol:WD_0530"/>
<dbReference type="eggNOG" id="COG0528">
    <property type="taxonomic scope" value="Bacteria"/>
</dbReference>
<dbReference type="UniPathway" id="UPA00159">
    <property type="reaction ID" value="UER00275"/>
</dbReference>
<dbReference type="Proteomes" id="UP000008215">
    <property type="component" value="Chromosome"/>
</dbReference>
<dbReference type="GO" id="GO:0005829">
    <property type="term" value="C:cytosol"/>
    <property type="evidence" value="ECO:0007669"/>
    <property type="project" value="TreeGrafter"/>
</dbReference>
<dbReference type="GO" id="GO:0005524">
    <property type="term" value="F:ATP binding"/>
    <property type="evidence" value="ECO:0007669"/>
    <property type="project" value="UniProtKB-KW"/>
</dbReference>
<dbReference type="GO" id="GO:0033862">
    <property type="term" value="F:UMP kinase activity"/>
    <property type="evidence" value="ECO:0007669"/>
    <property type="project" value="UniProtKB-EC"/>
</dbReference>
<dbReference type="GO" id="GO:0044210">
    <property type="term" value="P:'de novo' CTP biosynthetic process"/>
    <property type="evidence" value="ECO:0007669"/>
    <property type="project" value="UniProtKB-UniRule"/>
</dbReference>
<dbReference type="GO" id="GO:0006225">
    <property type="term" value="P:UDP biosynthetic process"/>
    <property type="evidence" value="ECO:0007669"/>
    <property type="project" value="TreeGrafter"/>
</dbReference>
<dbReference type="CDD" id="cd04254">
    <property type="entry name" value="AAK_UMPK-PyrH-Ec"/>
    <property type="match status" value="1"/>
</dbReference>
<dbReference type="FunFam" id="3.40.1160.10:FF:000001">
    <property type="entry name" value="Uridylate kinase"/>
    <property type="match status" value="1"/>
</dbReference>
<dbReference type="Gene3D" id="3.40.1160.10">
    <property type="entry name" value="Acetylglutamate kinase-like"/>
    <property type="match status" value="1"/>
</dbReference>
<dbReference type="HAMAP" id="MF_01220_B">
    <property type="entry name" value="PyrH_B"/>
    <property type="match status" value="1"/>
</dbReference>
<dbReference type="InterPro" id="IPR036393">
    <property type="entry name" value="AceGlu_kinase-like_sf"/>
</dbReference>
<dbReference type="InterPro" id="IPR001048">
    <property type="entry name" value="Asp/Glu/Uridylate_kinase"/>
</dbReference>
<dbReference type="InterPro" id="IPR011817">
    <property type="entry name" value="Uridylate_kinase"/>
</dbReference>
<dbReference type="InterPro" id="IPR015963">
    <property type="entry name" value="Uridylate_kinase_bac"/>
</dbReference>
<dbReference type="NCBIfam" id="TIGR02075">
    <property type="entry name" value="pyrH_bact"/>
    <property type="match status" value="1"/>
</dbReference>
<dbReference type="PANTHER" id="PTHR42833">
    <property type="entry name" value="URIDYLATE KINASE"/>
    <property type="match status" value="1"/>
</dbReference>
<dbReference type="PANTHER" id="PTHR42833:SF4">
    <property type="entry name" value="URIDYLATE KINASE PUMPKIN, CHLOROPLASTIC"/>
    <property type="match status" value="1"/>
</dbReference>
<dbReference type="Pfam" id="PF00696">
    <property type="entry name" value="AA_kinase"/>
    <property type="match status" value="1"/>
</dbReference>
<dbReference type="PIRSF" id="PIRSF005650">
    <property type="entry name" value="Uridylate_kin"/>
    <property type="match status" value="1"/>
</dbReference>
<dbReference type="SUPFAM" id="SSF53633">
    <property type="entry name" value="Carbamate kinase-like"/>
    <property type="match status" value="1"/>
</dbReference>
<sequence>MFISTNEKSEIKYSRVLFKISGEALMGSKQFGHDMEAIGELSKGIVEVCNLGVQVCIVVGGGNIFRGTSASLSGCERASSDYIGMLATIINALILQNFLEKNLVASRVLSAIPMATVCEPYIRRKAIRHLEKGRVVIFAAGTGNPFFTTDTAAALRAVEMNCDVILKGTQVNGVYSADPKKNEDAVMYDRLSYTDLLTRDLKVMDASAISLARENSIPIIVFSLKGEKIVNIIKGQGTYTIVSDCKQ</sequence>
<accession>Q73HM2</accession>
<name>PYRH_WOLPM</name>
<comment type="function">
    <text evidence="1">Catalyzes the reversible phosphorylation of UMP to UDP.</text>
</comment>
<comment type="catalytic activity">
    <reaction evidence="1">
        <text>UMP + ATP = UDP + ADP</text>
        <dbReference type="Rhea" id="RHEA:24400"/>
        <dbReference type="ChEBI" id="CHEBI:30616"/>
        <dbReference type="ChEBI" id="CHEBI:57865"/>
        <dbReference type="ChEBI" id="CHEBI:58223"/>
        <dbReference type="ChEBI" id="CHEBI:456216"/>
        <dbReference type="EC" id="2.7.4.22"/>
    </reaction>
</comment>
<comment type="activity regulation">
    <text evidence="1">Inhibited by UTP.</text>
</comment>
<comment type="pathway">
    <text evidence="1">Pyrimidine metabolism; CTP biosynthesis via de novo pathway; UDP from UMP (UMPK route): step 1/1.</text>
</comment>
<comment type="subunit">
    <text evidence="1">Homohexamer.</text>
</comment>
<comment type="subcellular location">
    <subcellularLocation>
        <location evidence="1">Cytoplasm</location>
    </subcellularLocation>
</comment>
<comment type="similarity">
    <text evidence="1">Belongs to the UMP kinase family.</text>
</comment>
<feature type="chain" id="PRO_0000323983" description="Uridylate kinase">
    <location>
        <begin position="1"/>
        <end position="247"/>
    </location>
</feature>
<feature type="binding site" evidence="1">
    <location>
        <begin position="19"/>
        <end position="22"/>
    </location>
    <ligand>
        <name>ATP</name>
        <dbReference type="ChEBI" id="CHEBI:30616"/>
    </ligand>
</feature>
<feature type="binding site" evidence="1">
    <location>
        <position position="61"/>
    </location>
    <ligand>
        <name>UMP</name>
        <dbReference type="ChEBI" id="CHEBI:57865"/>
    </ligand>
</feature>
<feature type="binding site" evidence="1">
    <location>
        <position position="62"/>
    </location>
    <ligand>
        <name>ATP</name>
        <dbReference type="ChEBI" id="CHEBI:30616"/>
    </ligand>
</feature>
<feature type="binding site" evidence="1">
    <location>
        <position position="66"/>
    </location>
    <ligand>
        <name>ATP</name>
        <dbReference type="ChEBI" id="CHEBI:30616"/>
    </ligand>
</feature>
<feature type="binding site" evidence="1">
    <location>
        <position position="81"/>
    </location>
    <ligand>
        <name>UMP</name>
        <dbReference type="ChEBI" id="CHEBI:57865"/>
    </ligand>
</feature>
<feature type="binding site" evidence="1">
    <location>
        <begin position="142"/>
        <end position="149"/>
    </location>
    <ligand>
        <name>UMP</name>
        <dbReference type="ChEBI" id="CHEBI:57865"/>
    </ligand>
</feature>
<feature type="binding site" evidence="1">
    <location>
        <position position="169"/>
    </location>
    <ligand>
        <name>ATP</name>
        <dbReference type="ChEBI" id="CHEBI:30616"/>
    </ligand>
</feature>
<feature type="binding site" evidence="1">
    <location>
        <position position="170"/>
    </location>
    <ligand>
        <name>ATP</name>
        <dbReference type="ChEBI" id="CHEBI:30616"/>
    </ligand>
</feature>
<feature type="binding site" evidence="1">
    <location>
        <position position="175"/>
    </location>
    <ligand>
        <name>ATP</name>
        <dbReference type="ChEBI" id="CHEBI:30616"/>
    </ligand>
</feature>
<feature type="binding site" evidence="1">
    <location>
        <position position="178"/>
    </location>
    <ligand>
        <name>ATP</name>
        <dbReference type="ChEBI" id="CHEBI:30616"/>
    </ligand>
</feature>
<protein>
    <recommendedName>
        <fullName evidence="1">Uridylate kinase</fullName>
        <shortName evidence="1">UK</shortName>
        <ecNumber evidence="1">2.7.4.22</ecNumber>
    </recommendedName>
    <alternativeName>
        <fullName evidence="1">Uridine monophosphate kinase</fullName>
        <shortName evidence="1">UMP kinase</shortName>
        <shortName evidence="1">UMPK</shortName>
    </alternativeName>
</protein>
<keyword id="KW-0067">ATP-binding</keyword>
<keyword id="KW-0963">Cytoplasm</keyword>
<keyword id="KW-0418">Kinase</keyword>
<keyword id="KW-0547">Nucleotide-binding</keyword>
<keyword id="KW-0665">Pyrimidine biosynthesis</keyword>
<keyword id="KW-0808">Transferase</keyword>
<reference key="1">
    <citation type="journal article" date="2004" name="PLoS Biol.">
        <title>Phylogenomics of the reproductive parasite Wolbachia pipientis wMel: a streamlined genome overrun by mobile genetic elements.</title>
        <authorList>
            <person name="Wu M."/>
            <person name="Sun L.V."/>
            <person name="Vamathevan J.J."/>
            <person name="Riegler M."/>
            <person name="DeBoy R.T."/>
            <person name="Brownlie J.C."/>
            <person name="McGraw E.A."/>
            <person name="Martin W."/>
            <person name="Esser C."/>
            <person name="Ahmadinejad N."/>
            <person name="Wiegand C."/>
            <person name="Madupu R."/>
            <person name="Beanan M.J."/>
            <person name="Brinkac L.M."/>
            <person name="Daugherty S.C."/>
            <person name="Durkin A.S."/>
            <person name="Kolonay J.F."/>
            <person name="Nelson W.C."/>
            <person name="Mohamoud Y."/>
            <person name="Lee P."/>
            <person name="Berry K.J."/>
            <person name="Young M.B."/>
            <person name="Utterback T.R."/>
            <person name="Weidman J.F."/>
            <person name="Nierman W.C."/>
            <person name="Paulsen I.T."/>
            <person name="Nelson K.E."/>
            <person name="Tettelin H."/>
            <person name="O'Neill S.L."/>
            <person name="Eisen J.A."/>
        </authorList>
    </citation>
    <scope>NUCLEOTIDE SEQUENCE [LARGE SCALE GENOMIC DNA]</scope>
</reference>
<proteinExistence type="inferred from homology"/>
<evidence type="ECO:0000255" key="1">
    <source>
        <dbReference type="HAMAP-Rule" id="MF_01220"/>
    </source>
</evidence>
<gene>
    <name evidence="1" type="primary">pyrH</name>
    <name type="ordered locus">WD_0530</name>
</gene>
<organism>
    <name type="scientific">Wolbachia pipientis wMel</name>
    <dbReference type="NCBI Taxonomy" id="163164"/>
    <lineage>
        <taxon>Bacteria</taxon>
        <taxon>Pseudomonadati</taxon>
        <taxon>Pseudomonadota</taxon>
        <taxon>Alphaproteobacteria</taxon>
        <taxon>Rickettsiales</taxon>
        <taxon>Anaplasmataceae</taxon>
        <taxon>Wolbachieae</taxon>
        <taxon>Wolbachia</taxon>
    </lineage>
</organism>